<dbReference type="EMBL" id="AL766856">
    <property type="protein sequence ID" value="CAD47758.1"/>
    <property type="molecule type" value="Genomic_DNA"/>
</dbReference>
<dbReference type="RefSeq" id="WP_000864242.1">
    <property type="nucleotide sequence ID" value="NC_004368.1"/>
</dbReference>
<dbReference type="SMR" id="Q8E2M3"/>
<dbReference type="GeneID" id="66886875"/>
<dbReference type="KEGG" id="san:rplI"/>
<dbReference type="eggNOG" id="COG0359">
    <property type="taxonomic scope" value="Bacteria"/>
</dbReference>
<dbReference type="HOGENOM" id="CLU_078938_3_2_9"/>
<dbReference type="Proteomes" id="UP000000823">
    <property type="component" value="Chromosome"/>
</dbReference>
<dbReference type="GO" id="GO:1990904">
    <property type="term" value="C:ribonucleoprotein complex"/>
    <property type="evidence" value="ECO:0007669"/>
    <property type="project" value="UniProtKB-KW"/>
</dbReference>
<dbReference type="GO" id="GO:0005840">
    <property type="term" value="C:ribosome"/>
    <property type="evidence" value="ECO:0007669"/>
    <property type="project" value="UniProtKB-KW"/>
</dbReference>
<dbReference type="GO" id="GO:0019843">
    <property type="term" value="F:rRNA binding"/>
    <property type="evidence" value="ECO:0007669"/>
    <property type="project" value="UniProtKB-UniRule"/>
</dbReference>
<dbReference type="GO" id="GO:0003735">
    <property type="term" value="F:structural constituent of ribosome"/>
    <property type="evidence" value="ECO:0007669"/>
    <property type="project" value="InterPro"/>
</dbReference>
<dbReference type="GO" id="GO:0006412">
    <property type="term" value="P:translation"/>
    <property type="evidence" value="ECO:0007669"/>
    <property type="project" value="UniProtKB-UniRule"/>
</dbReference>
<dbReference type="FunFam" id="3.40.5.10:FF:000002">
    <property type="entry name" value="50S ribosomal protein L9"/>
    <property type="match status" value="1"/>
</dbReference>
<dbReference type="Gene3D" id="3.10.430.100">
    <property type="entry name" value="Ribosomal protein L9, C-terminal domain"/>
    <property type="match status" value="1"/>
</dbReference>
<dbReference type="Gene3D" id="3.40.5.10">
    <property type="entry name" value="Ribosomal protein L9, N-terminal domain"/>
    <property type="match status" value="1"/>
</dbReference>
<dbReference type="HAMAP" id="MF_00503">
    <property type="entry name" value="Ribosomal_bL9"/>
    <property type="match status" value="1"/>
</dbReference>
<dbReference type="InterPro" id="IPR000244">
    <property type="entry name" value="Ribosomal_bL9"/>
</dbReference>
<dbReference type="InterPro" id="IPR009027">
    <property type="entry name" value="Ribosomal_bL9/RNase_H1_N"/>
</dbReference>
<dbReference type="InterPro" id="IPR020594">
    <property type="entry name" value="Ribosomal_bL9_bac/chp"/>
</dbReference>
<dbReference type="InterPro" id="IPR020069">
    <property type="entry name" value="Ribosomal_bL9_C"/>
</dbReference>
<dbReference type="InterPro" id="IPR036791">
    <property type="entry name" value="Ribosomal_bL9_C_sf"/>
</dbReference>
<dbReference type="InterPro" id="IPR020070">
    <property type="entry name" value="Ribosomal_bL9_N"/>
</dbReference>
<dbReference type="InterPro" id="IPR036935">
    <property type="entry name" value="Ribosomal_bL9_N_sf"/>
</dbReference>
<dbReference type="NCBIfam" id="TIGR00158">
    <property type="entry name" value="L9"/>
    <property type="match status" value="1"/>
</dbReference>
<dbReference type="PANTHER" id="PTHR21368">
    <property type="entry name" value="50S RIBOSOMAL PROTEIN L9"/>
    <property type="match status" value="1"/>
</dbReference>
<dbReference type="Pfam" id="PF03948">
    <property type="entry name" value="Ribosomal_L9_C"/>
    <property type="match status" value="1"/>
</dbReference>
<dbReference type="Pfam" id="PF01281">
    <property type="entry name" value="Ribosomal_L9_N"/>
    <property type="match status" value="1"/>
</dbReference>
<dbReference type="SUPFAM" id="SSF55658">
    <property type="entry name" value="L9 N-domain-like"/>
    <property type="match status" value="1"/>
</dbReference>
<dbReference type="SUPFAM" id="SSF55653">
    <property type="entry name" value="Ribosomal protein L9 C-domain"/>
    <property type="match status" value="1"/>
</dbReference>
<dbReference type="PROSITE" id="PS00651">
    <property type="entry name" value="RIBOSOMAL_L9"/>
    <property type="match status" value="1"/>
</dbReference>
<comment type="function">
    <text evidence="1">Binds to the 23S rRNA.</text>
</comment>
<comment type="similarity">
    <text evidence="1">Belongs to the bacterial ribosomal protein bL9 family.</text>
</comment>
<sequence>MKVIFLQDVKGKGKKGEVKEVPTGYAQNFLLKKNLAKEATTQAIGELKGKQKSEEKAQAEILAQAKELKTQLESETTRVQFIEKVGPDGRTFGSITAKKIAEELQKQYGIKIDKRHIDLDHTIRAIGKVEVPVKLHKQVSSQIKLDIKEA</sequence>
<gene>
    <name evidence="1" type="primary">rplI</name>
    <name type="ordered locus">gbs2099</name>
</gene>
<protein>
    <recommendedName>
        <fullName evidence="1">Large ribosomal subunit protein bL9</fullName>
    </recommendedName>
    <alternativeName>
        <fullName evidence="2">50S ribosomal protein L9</fullName>
    </alternativeName>
</protein>
<feature type="chain" id="PRO_0000236593" description="Large ribosomal subunit protein bL9">
    <location>
        <begin position="1"/>
        <end position="150"/>
    </location>
</feature>
<accession>Q8E2M3</accession>
<evidence type="ECO:0000255" key="1">
    <source>
        <dbReference type="HAMAP-Rule" id="MF_00503"/>
    </source>
</evidence>
<evidence type="ECO:0000305" key="2"/>
<name>RL9_STRA3</name>
<keyword id="KW-0687">Ribonucleoprotein</keyword>
<keyword id="KW-0689">Ribosomal protein</keyword>
<keyword id="KW-0694">RNA-binding</keyword>
<keyword id="KW-0699">rRNA-binding</keyword>
<organism>
    <name type="scientific">Streptococcus agalactiae serotype III (strain NEM316)</name>
    <dbReference type="NCBI Taxonomy" id="211110"/>
    <lineage>
        <taxon>Bacteria</taxon>
        <taxon>Bacillati</taxon>
        <taxon>Bacillota</taxon>
        <taxon>Bacilli</taxon>
        <taxon>Lactobacillales</taxon>
        <taxon>Streptococcaceae</taxon>
        <taxon>Streptococcus</taxon>
    </lineage>
</organism>
<reference key="1">
    <citation type="journal article" date="2002" name="Mol. Microbiol.">
        <title>Genome sequence of Streptococcus agalactiae, a pathogen causing invasive neonatal disease.</title>
        <authorList>
            <person name="Glaser P."/>
            <person name="Rusniok C."/>
            <person name="Buchrieser C."/>
            <person name="Chevalier F."/>
            <person name="Frangeul L."/>
            <person name="Msadek T."/>
            <person name="Zouine M."/>
            <person name="Couve E."/>
            <person name="Lalioui L."/>
            <person name="Poyart C."/>
            <person name="Trieu-Cuot P."/>
            <person name="Kunst F."/>
        </authorList>
    </citation>
    <scope>NUCLEOTIDE SEQUENCE [LARGE SCALE GENOMIC DNA]</scope>
    <source>
        <strain>NEM316</strain>
    </source>
</reference>
<proteinExistence type="inferred from homology"/>